<gene>
    <name evidence="1" type="primary">rplV</name>
    <name type="ordered locus">Tbd_0410</name>
</gene>
<sequence length="109" mass="11722">MEVSAILRGTRLSAQKGRLVADQIRGLRVEKALNILAFSPKKGAGIIKKVLESAIANAEHNEGADIDALKVKTIYVDQGSVLKRFTARAKGRGNRISKPTCHITVTVGD</sequence>
<comment type="function">
    <text evidence="1">This protein binds specifically to 23S rRNA; its binding is stimulated by other ribosomal proteins, e.g. L4, L17, and L20. It is important during the early stages of 50S assembly. It makes multiple contacts with different domains of the 23S rRNA in the assembled 50S subunit and ribosome (By similarity).</text>
</comment>
<comment type="function">
    <text evidence="1">The globular domain of the protein is located near the polypeptide exit tunnel on the outside of the subunit, while an extended beta-hairpin is found that lines the wall of the exit tunnel in the center of the 70S ribosome.</text>
</comment>
<comment type="subunit">
    <text evidence="1">Part of the 50S ribosomal subunit.</text>
</comment>
<comment type="similarity">
    <text evidence="1">Belongs to the universal ribosomal protein uL22 family.</text>
</comment>
<organism>
    <name type="scientific">Thiobacillus denitrificans (strain ATCC 25259 / T1)</name>
    <dbReference type="NCBI Taxonomy" id="292415"/>
    <lineage>
        <taxon>Bacteria</taxon>
        <taxon>Pseudomonadati</taxon>
        <taxon>Pseudomonadota</taxon>
        <taxon>Betaproteobacteria</taxon>
        <taxon>Nitrosomonadales</taxon>
        <taxon>Thiobacillaceae</taxon>
        <taxon>Thiobacillus</taxon>
    </lineage>
</organism>
<proteinExistence type="inferred from homology"/>
<name>RL22_THIDA</name>
<protein>
    <recommendedName>
        <fullName evidence="1">Large ribosomal subunit protein uL22</fullName>
    </recommendedName>
    <alternativeName>
        <fullName evidence="2">50S ribosomal protein L22</fullName>
    </alternativeName>
</protein>
<accession>Q3SLP4</accession>
<reference key="1">
    <citation type="journal article" date="2006" name="J. Bacteriol.">
        <title>The genome sequence of the obligately chemolithoautotrophic, facultatively anaerobic bacterium Thiobacillus denitrificans.</title>
        <authorList>
            <person name="Beller H.R."/>
            <person name="Chain P.S."/>
            <person name="Letain T.E."/>
            <person name="Chakicherla A."/>
            <person name="Larimer F.W."/>
            <person name="Richardson P.M."/>
            <person name="Coleman M.A."/>
            <person name="Wood A.P."/>
            <person name="Kelly D.P."/>
        </authorList>
    </citation>
    <scope>NUCLEOTIDE SEQUENCE [LARGE SCALE GENOMIC DNA]</scope>
    <source>
        <strain>ATCC 25259 / T1</strain>
    </source>
</reference>
<feature type="chain" id="PRO_0000243223" description="Large ribosomal subunit protein uL22">
    <location>
        <begin position="1"/>
        <end position="109"/>
    </location>
</feature>
<evidence type="ECO:0000255" key="1">
    <source>
        <dbReference type="HAMAP-Rule" id="MF_01331"/>
    </source>
</evidence>
<evidence type="ECO:0000305" key="2"/>
<keyword id="KW-1185">Reference proteome</keyword>
<keyword id="KW-0687">Ribonucleoprotein</keyword>
<keyword id="KW-0689">Ribosomal protein</keyword>
<keyword id="KW-0694">RNA-binding</keyword>
<keyword id="KW-0699">rRNA-binding</keyword>
<dbReference type="EMBL" id="CP000116">
    <property type="protein sequence ID" value="AAZ96363.1"/>
    <property type="molecule type" value="Genomic_DNA"/>
</dbReference>
<dbReference type="RefSeq" id="WP_011310922.1">
    <property type="nucleotide sequence ID" value="NC_007404.1"/>
</dbReference>
<dbReference type="SMR" id="Q3SLP4"/>
<dbReference type="STRING" id="292415.Tbd_0410"/>
<dbReference type="KEGG" id="tbd:Tbd_0410"/>
<dbReference type="eggNOG" id="COG0091">
    <property type="taxonomic scope" value="Bacteria"/>
</dbReference>
<dbReference type="HOGENOM" id="CLU_083987_3_3_4"/>
<dbReference type="OrthoDB" id="9805969at2"/>
<dbReference type="Proteomes" id="UP000008291">
    <property type="component" value="Chromosome"/>
</dbReference>
<dbReference type="GO" id="GO:0022625">
    <property type="term" value="C:cytosolic large ribosomal subunit"/>
    <property type="evidence" value="ECO:0007669"/>
    <property type="project" value="TreeGrafter"/>
</dbReference>
<dbReference type="GO" id="GO:0019843">
    <property type="term" value="F:rRNA binding"/>
    <property type="evidence" value="ECO:0007669"/>
    <property type="project" value="UniProtKB-UniRule"/>
</dbReference>
<dbReference type="GO" id="GO:0003735">
    <property type="term" value="F:structural constituent of ribosome"/>
    <property type="evidence" value="ECO:0007669"/>
    <property type="project" value="InterPro"/>
</dbReference>
<dbReference type="GO" id="GO:0006412">
    <property type="term" value="P:translation"/>
    <property type="evidence" value="ECO:0007669"/>
    <property type="project" value="UniProtKB-UniRule"/>
</dbReference>
<dbReference type="CDD" id="cd00336">
    <property type="entry name" value="Ribosomal_L22"/>
    <property type="match status" value="1"/>
</dbReference>
<dbReference type="FunFam" id="3.90.470.10:FF:000001">
    <property type="entry name" value="50S ribosomal protein L22"/>
    <property type="match status" value="1"/>
</dbReference>
<dbReference type="Gene3D" id="3.90.470.10">
    <property type="entry name" value="Ribosomal protein L22/L17"/>
    <property type="match status" value="1"/>
</dbReference>
<dbReference type="HAMAP" id="MF_01331_B">
    <property type="entry name" value="Ribosomal_uL22_B"/>
    <property type="match status" value="1"/>
</dbReference>
<dbReference type="InterPro" id="IPR001063">
    <property type="entry name" value="Ribosomal_uL22"/>
</dbReference>
<dbReference type="InterPro" id="IPR005727">
    <property type="entry name" value="Ribosomal_uL22_bac/chlpt-type"/>
</dbReference>
<dbReference type="InterPro" id="IPR047867">
    <property type="entry name" value="Ribosomal_uL22_bac/org-type"/>
</dbReference>
<dbReference type="InterPro" id="IPR018260">
    <property type="entry name" value="Ribosomal_uL22_CS"/>
</dbReference>
<dbReference type="InterPro" id="IPR036394">
    <property type="entry name" value="Ribosomal_uL22_sf"/>
</dbReference>
<dbReference type="NCBIfam" id="TIGR01044">
    <property type="entry name" value="rplV_bact"/>
    <property type="match status" value="1"/>
</dbReference>
<dbReference type="PANTHER" id="PTHR13501">
    <property type="entry name" value="CHLOROPLAST 50S RIBOSOMAL PROTEIN L22-RELATED"/>
    <property type="match status" value="1"/>
</dbReference>
<dbReference type="PANTHER" id="PTHR13501:SF8">
    <property type="entry name" value="LARGE RIBOSOMAL SUBUNIT PROTEIN UL22M"/>
    <property type="match status" value="1"/>
</dbReference>
<dbReference type="Pfam" id="PF00237">
    <property type="entry name" value="Ribosomal_L22"/>
    <property type="match status" value="1"/>
</dbReference>
<dbReference type="SUPFAM" id="SSF54843">
    <property type="entry name" value="Ribosomal protein L22"/>
    <property type="match status" value="1"/>
</dbReference>
<dbReference type="PROSITE" id="PS00464">
    <property type="entry name" value="RIBOSOMAL_L22"/>
    <property type="match status" value="1"/>
</dbReference>